<keyword id="KW-0233">DNA recombination</keyword>
<keyword id="KW-0238">DNA-binding</keyword>
<keyword id="KW-0804">Transcription</keyword>
<keyword id="KW-0805">Transcription regulation</keyword>
<keyword id="KW-0810">Translation regulation</keyword>
<proteinExistence type="inferred from homology"/>
<accession>B1IW19</accession>
<sequence>MTKSELIERLATQQSHIPAKTVEDAVKEMLEHMASTLAQGERIEIRGFGSFSLHYRAPRTGRNPKTGDKVELEGKYVPHFKPGKELRDRANIYG</sequence>
<comment type="function">
    <text evidence="1">This protein is one of the two subunits of integration host factor, a specific DNA-binding protein that functions in genetic recombination as well as in transcriptional and translational control.</text>
</comment>
<comment type="subunit">
    <text evidence="1">Heterodimer of an alpha and a beta chain.</text>
</comment>
<comment type="similarity">
    <text evidence="1">Belongs to the bacterial histone-like protein family.</text>
</comment>
<reference key="1">
    <citation type="submission" date="2008-02" db="EMBL/GenBank/DDBJ databases">
        <title>Complete sequence of Escherichia coli C str. ATCC 8739.</title>
        <authorList>
            <person name="Copeland A."/>
            <person name="Lucas S."/>
            <person name="Lapidus A."/>
            <person name="Glavina del Rio T."/>
            <person name="Dalin E."/>
            <person name="Tice H."/>
            <person name="Bruce D."/>
            <person name="Goodwin L."/>
            <person name="Pitluck S."/>
            <person name="Kiss H."/>
            <person name="Brettin T."/>
            <person name="Detter J.C."/>
            <person name="Han C."/>
            <person name="Kuske C.R."/>
            <person name="Schmutz J."/>
            <person name="Larimer F."/>
            <person name="Land M."/>
            <person name="Hauser L."/>
            <person name="Kyrpides N."/>
            <person name="Mikhailova N."/>
            <person name="Ingram L."/>
            <person name="Richardson P."/>
        </authorList>
    </citation>
    <scope>NUCLEOTIDE SEQUENCE [LARGE SCALE GENOMIC DNA]</scope>
    <source>
        <strain>ATCC 8739 / DSM 1576 / NBRC 3972 / NCIMB 8545 / WDCM 00012 / Crooks</strain>
    </source>
</reference>
<gene>
    <name evidence="1" type="primary">ihfB</name>
    <name evidence="1" type="synonym">himD</name>
    <name type="ordered locus">EcolC_2684</name>
</gene>
<organism>
    <name type="scientific">Escherichia coli (strain ATCC 8739 / DSM 1576 / NBRC 3972 / NCIMB 8545 / WDCM 00012 / Crooks)</name>
    <dbReference type="NCBI Taxonomy" id="481805"/>
    <lineage>
        <taxon>Bacteria</taxon>
        <taxon>Pseudomonadati</taxon>
        <taxon>Pseudomonadota</taxon>
        <taxon>Gammaproteobacteria</taxon>
        <taxon>Enterobacterales</taxon>
        <taxon>Enterobacteriaceae</taxon>
        <taxon>Escherichia</taxon>
    </lineage>
</organism>
<feature type="chain" id="PRO_1000080044" description="Integration host factor subunit beta">
    <location>
        <begin position="1"/>
        <end position="94"/>
    </location>
</feature>
<protein>
    <recommendedName>
        <fullName evidence="1">Integration host factor subunit beta</fullName>
        <shortName evidence="1">IHF-beta</shortName>
    </recommendedName>
</protein>
<dbReference type="EMBL" id="CP000946">
    <property type="protein sequence ID" value="ACA78313.1"/>
    <property type="molecule type" value="Genomic_DNA"/>
</dbReference>
<dbReference type="RefSeq" id="WP_000167336.1">
    <property type="nucleotide sequence ID" value="NZ_MTFT01000009.1"/>
</dbReference>
<dbReference type="SMR" id="B1IW19"/>
<dbReference type="GeneID" id="93776505"/>
<dbReference type="KEGG" id="ecl:EcolC_2684"/>
<dbReference type="HOGENOM" id="CLU_105066_2_0_6"/>
<dbReference type="GO" id="GO:0005694">
    <property type="term" value="C:chromosome"/>
    <property type="evidence" value="ECO:0007669"/>
    <property type="project" value="InterPro"/>
</dbReference>
<dbReference type="GO" id="GO:0005829">
    <property type="term" value="C:cytosol"/>
    <property type="evidence" value="ECO:0007669"/>
    <property type="project" value="TreeGrafter"/>
</dbReference>
<dbReference type="GO" id="GO:0003677">
    <property type="term" value="F:DNA binding"/>
    <property type="evidence" value="ECO:0007669"/>
    <property type="project" value="UniProtKB-UniRule"/>
</dbReference>
<dbReference type="GO" id="GO:0030527">
    <property type="term" value="F:structural constituent of chromatin"/>
    <property type="evidence" value="ECO:0007669"/>
    <property type="project" value="InterPro"/>
</dbReference>
<dbReference type="GO" id="GO:0006310">
    <property type="term" value="P:DNA recombination"/>
    <property type="evidence" value="ECO:0007669"/>
    <property type="project" value="UniProtKB-UniRule"/>
</dbReference>
<dbReference type="GO" id="GO:0006355">
    <property type="term" value="P:regulation of DNA-templated transcription"/>
    <property type="evidence" value="ECO:0007669"/>
    <property type="project" value="UniProtKB-UniRule"/>
</dbReference>
<dbReference type="GO" id="GO:0006417">
    <property type="term" value="P:regulation of translation"/>
    <property type="evidence" value="ECO:0007669"/>
    <property type="project" value="UniProtKB-UniRule"/>
</dbReference>
<dbReference type="CDD" id="cd13836">
    <property type="entry name" value="IHF_B"/>
    <property type="match status" value="1"/>
</dbReference>
<dbReference type="FunFam" id="4.10.520.10:FF:000003">
    <property type="entry name" value="Integration host factor subunit beta"/>
    <property type="match status" value="1"/>
</dbReference>
<dbReference type="Gene3D" id="4.10.520.10">
    <property type="entry name" value="IHF-like DNA-binding proteins"/>
    <property type="match status" value="1"/>
</dbReference>
<dbReference type="HAMAP" id="MF_00381">
    <property type="entry name" value="IHF_beta"/>
    <property type="match status" value="1"/>
</dbReference>
<dbReference type="InterPro" id="IPR000119">
    <property type="entry name" value="Hist_DNA-bd"/>
</dbReference>
<dbReference type="InterPro" id="IPR020816">
    <property type="entry name" value="Histone-like_DNA-bd_CS"/>
</dbReference>
<dbReference type="InterPro" id="IPR010992">
    <property type="entry name" value="IHF-like_DNA-bd_dom_sf"/>
</dbReference>
<dbReference type="InterPro" id="IPR005685">
    <property type="entry name" value="IHF_beta"/>
</dbReference>
<dbReference type="NCBIfam" id="TIGR00988">
    <property type="entry name" value="hip"/>
    <property type="match status" value="1"/>
</dbReference>
<dbReference type="NCBIfam" id="NF001222">
    <property type="entry name" value="PRK00199.1"/>
    <property type="match status" value="1"/>
</dbReference>
<dbReference type="PANTHER" id="PTHR33175">
    <property type="entry name" value="DNA-BINDING PROTEIN HU"/>
    <property type="match status" value="1"/>
</dbReference>
<dbReference type="PANTHER" id="PTHR33175:SF5">
    <property type="entry name" value="INTEGRATION HOST FACTOR SUBUNIT BETA"/>
    <property type="match status" value="1"/>
</dbReference>
<dbReference type="Pfam" id="PF00216">
    <property type="entry name" value="Bac_DNA_binding"/>
    <property type="match status" value="1"/>
</dbReference>
<dbReference type="PRINTS" id="PR01727">
    <property type="entry name" value="DNABINDINGHU"/>
</dbReference>
<dbReference type="SMART" id="SM00411">
    <property type="entry name" value="BHL"/>
    <property type="match status" value="1"/>
</dbReference>
<dbReference type="SUPFAM" id="SSF47729">
    <property type="entry name" value="IHF-like DNA-binding proteins"/>
    <property type="match status" value="1"/>
</dbReference>
<dbReference type="PROSITE" id="PS00045">
    <property type="entry name" value="HISTONE_LIKE"/>
    <property type="match status" value="1"/>
</dbReference>
<evidence type="ECO:0000255" key="1">
    <source>
        <dbReference type="HAMAP-Rule" id="MF_00381"/>
    </source>
</evidence>
<name>IHFB_ECOLC</name>